<comment type="function">
    <text evidence="1">Catalyzes the sequential NAD-dependent oxidations of L-histidinol to L-histidinaldehyde and then to L-histidine.</text>
</comment>
<comment type="catalytic activity">
    <reaction evidence="1">
        <text>L-histidinol + 2 NAD(+) + H2O = L-histidine + 2 NADH + 3 H(+)</text>
        <dbReference type="Rhea" id="RHEA:20641"/>
        <dbReference type="ChEBI" id="CHEBI:15377"/>
        <dbReference type="ChEBI" id="CHEBI:15378"/>
        <dbReference type="ChEBI" id="CHEBI:57540"/>
        <dbReference type="ChEBI" id="CHEBI:57595"/>
        <dbReference type="ChEBI" id="CHEBI:57699"/>
        <dbReference type="ChEBI" id="CHEBI:57945"/>
        <dbReference type="EC" id="1.1.1.23"/>
    </reaction>
</comment>
<comment type="cofactor">
    <cofactor evidence="1">
        <name>Zn(2+)</name>
        <dbReference type="ChEBI" id="CHEBI:29105"/>
    </cofactor>
    <text evidence="1">Binds 1 zinc ion per subunit.</text>
</comment>
<comment type="pathway">
    <text evidence="1">Amino-acid biosynthesis; L-histidine biosynthesis; L-histidine from 5-phospho-alpha-D-ribose 1-diphosphate: step 9/9.</text>
</comment>
<comment type="similarity">
    <text evidence="1">Belongs to the histidinol dehydrogenase family.</text>
</comment>
<organism>
    <name type="scientific">Dechloromonas aromatica (strain RCB)</name>
    <dbReference type="NCBI Taxonomy" id="159087"/>
    <lineage>
        <taxon>Bacteria</taxon>
        <taxon>Pseudomonadati</taxon>
        <taxon>Pseudomonadota</taxon>
        <taxon>Betaproteobacteria</taxon>
        <taxon>Rhodocyclales</taxon>
        <taxon>Azonexaceae</taxon>
        <taxon>Dechloromonas</taxon>
    </lineage>
</organism>
<proteinExistence type="inferred from homology"/>
<accession>Q47AL5</accession>
<feature type="chain" id="PRO_0000135763" description="Histidinol dehydrogenase">
    <location>
        <begin position="1"/>
        <end position="433"/>
    </location>
</feature>
<feature type="active site" description="Proton acceptor" evidence="1">
    <location>
        <position position="330"/>
    </location>
</feature>
<feature type="active site" description="Proton acceptor" evidence="1">
    <location>
        <position position="331"/>
    </location>
</feature>
<feature type="binding site" evidence="1">
    <location>
        <position position="133"/>
    </location>
    <ligand>
        <name>NAD(+)</name>
        <dbReference type="ChEBI" id="CHEBI:57540"/>
    </ligand>
</feature>
<feature type="binding site" evidence="1">
    <location>
        <position position="194"/>
    </location>
    <ligand>
        <name>NAD(+)</name>
        <dbReference type="ChEBI" id="CHEBI:57540"/>
    </ligand>
</feature>
<feature type="binding site" evidence="1">
    <location>
        <position position="217"/>
    </location>
    <ligand>
        <name>NAD(+)</name>
        <dbReference type="ChEBI" id="CHEBI:57540"/>
    </ligand>
</feature>
<feature type="binding site" evidence="1">
    <location>
        <position position="240"/>
    </location>
    <ligand>
        <name>substrate</name>
    </ligand>
</feature>
<feature type="binding site" evidence="1">
    <location>
        <position position="262"/>
    </location>
    <ligand>
        <name>substrate</name>
    </ligand>
</feature>
<feature type="binding site" evidence="1">
    <location>
        <position position="262"/>
    </location>
    <ligand>
        <name>Zn(2+)</name>
        <dbReference type="ChEBI" id="CHEBI:29105"/>
    </ligand>
</feature>
<feature type="binding site" evidence="1">
    <location>
        <position position="265"/>
    </location>
    <ligand>
        <name>substrate</name>
    </ligand>
</feature>
<feature type="binding site" evidence="1">
    <location>
        <position position="265"/>
    </location>
    <ligand>
        <name>Zn(2+)</name>
        <dbReference type="ChEBI" id="CHEBI:29105"/>
    </ligand>
</feature>
<feature type="binding site" evidence="1">
    <location>
        <position position="331"/>
    </location>
    <ligand>
        <name>substrate</name>
    </ligand>
</feature>
<feature type="binding site" evidence="1">
    <location>
        <position position="364"/>
    </location>
    <ligand>
        <name>substrate</name>
    </ligand>
</feature>
<feature type="binding site" evidence="1">
    <location>
        <position position="364"/>
    </location>
    <ligand>
        <name>Zn(2+)</name>
        <dbReference type="ChEBI" id="CHEBI:29105"/>
    </ligand>
</feature>
<feature type="binding site" evidence="1">
    <location>
        <position position="418"/>
    </location>
    <ligand>
        <name>substrate</name>
    </ligand>
</feature>
<feature type="binding site" evidence="1">
    <location>
        <position position="423"/>
    </location>
    <ligand>
        <name>substrate</name>
    </ligand>
</feature>
<feature type="binding site" evidence="1">
    <location>
        <position position="423"/>
    </location>
    <ligand>
        <name>Zn(2+)</name>
        <dbReference type="ChEBI" id="CHEBI:29105"/>
    </ligand>
</feature>
<protein>
    <recommendedName>
        <fullName evidence="1">Histidinol dehydrogenase</fullName>
        <shortName evidence="1">HDH</shortName>
        <ecNumber evidence="1">1.1.1.23</ecNumber>
    </recommendedName>
</protein>
<dbReference type="EC" id="1.1.1.23" evidence="1"/>
<dbReference type="EMBL" id="CP000089">
    <property type="protein sequence ID" value="AAZ48116.1"/>
    <property type="molecule type" value="Genomic_DNA"/>
</dbReference>
<dbReference type="SMR" id="Q47AL5"/>
<dbReference type="STRING" id="159087.Daro_3387"/>
<dbReference type="KEGG" id="dar:Daro_3387"/>
<dbReference type="eggNOG" id="COG0141">
    <property type="taxonomic scope" value="Bacteria"/>
</dbReference>
<dbReference type="HOGENOM" id="CLU_006732_3_3_4"/>
<dbReference type="OrthoDB" id="9805269at2"/>
<dbReference type="UniPathway" id="UPA00031">
    <property type="reaction ID" value="UER00014"/>
</dbReference>
<dbReference type="GO" id="GO:0005829">
    <property type="term" value="C:cytosol"/>
    <property type="evidence" value="ECO:0007669"/>
    <property type="project" value="TreeGrafter"/>
</dbReference>
<dbReference type="GO" id="GO:0004399">
    <property type="term" value="F:histidinol dehydrogenase activity"/>
    <property type="evidence" value="ECO:0007669"/>
    <property type="project" value="UniProtKB-UniRule"/>
</dbReference>
<dbReference type="GO" id="GO:0051287">
    <property type="term" value="F:NAD binding"/>
    <property type="evidence" value="ECO:0007669"/>
    <property type="project" value="InterPro"/>
</dbReference>
<dbReference type="GO" id="GO:0008270">
    <property type="term" value="F:zinc ion binding"/>
    <property type="evidence" value="ECO:0007669"/>
    <property type="project" value="UniProtKB-UniRule"/>
</dbReference>
<dbReference type="GO" id="GO:0000105">
    <property type="term" value="P:L-histidine biosynthetic process"/>
    <property type="evidence" value="ECO:0007669"/>
    <property type="project" value="UniProtKB-UniRule"/>
</dbReference>
<dbReference type="CDD" id="cd06572">
    <property type="entry name" value="Histidinol_dh"/>
    <property type="match status" value="1"/>
</dbReference>
<dbReference type="FunFam" id="3.40.50.1980:FF:000001">
    <property type="entry name" value="Histidinol dehydrogenase"/>
    <property type="match status" value="1"/>
</dbReference>
<dbReference type="FunFam" id="3.40.50.1980:FF:000026">
    <property type="entry name" value="Histidinol dehydrogenase"/>
    <property type="match status" value="1"/>
</dbReference>
<dbReference type="Gene3D" id="1.20.5.1300">
    <property type="match status" value="1"/>
</dbReference>
<dbReference type="Gene3D" id="3.40.50.1980">
    <property type="entry name" value="Nitrogenase molybdenum iron protein domain"/>
    <property type="match status" value="2"/>
</dbReference>
<dbReference type="HAMAP" id="MF_01024">
    <property type="entry name" value="HisD"/>
    <property type="match status" value="1"/>
</dbReference>
<dbReference type="InterPro" id="IPR016161">
    <property type="entry name" value="Ald_DH/histidinol_DH"/>
</dbReference>
<dbReference type="InterPro" id="IPR001692">
    <property type="entry name" value="Histidinol_DH_CS"/>
</dbReference>
<dbReference type="InterPro" id="IPR022695">
    <property type="entry name" value="Histidinol_DH_monofunct"/>
</dbReference>
<dbReference type="InterPro" id="IPR012131">
    <property type="entry name" value="Hstdl_DH"/>
</dbReference>
<dbReference type="NCBIfam" id="TIGR00069">
    <property type="entry name" value="hisD"/>
    <property type="match status" value="1"/>
</dbReference>
<dbReference type="PANTHER" id="PTHR21256:SF2">
    <property type="entry name" value="HISTIDINE BIOSYNTHESIS TRIFUNCTIONAL PROTEIN"/>
    <property type="match status" value="1"/>
</dbReference>
<dbReference type="PANTHER" id="PTHR21256">
    <property type="entry name" value="HISTIDINOL DEHYDROGENASE HDH"/>
    <property type="match status" value="1"/>
</dbReference>
<dbReference type="Pfam" id="PF00815">
    <property type="entry name" value="Histidinol_dh"/>
    <property type="match status" value="1"/>
</dbReference>
<dbReference type="PIRSF" id="PIRSF000099">
    <property type="entry name" value="Histidinol_dh"/>
    <property type="match status" value="1"/>
</dbReference>
<dbReference type="PRINTS" id="PR00083">
    <property type="entry name" value="HOLDHDRGNASE"/>
</dbReference>
<dbReference type="SUPFAM" id="SSF53720">
    <property type="entry name" value="ALDH-like"/>
    <property type="match status" value="1"/>
</dbReference>
<dbReference type="PROSITE" id="PS00611">
    <property type="entry name" value="HISOL_DEHYDROGENASE"/>
    <property type="match status" value="1"/>
</dbReference>
<name>HISX_DECAR</name>
<sequence>MVAIKRLATVDADFKAQMDALLAFEAAQDEGIERTVIGILADVKARGDAAVVEYSNKFDRLTASSMADLELSKAEMQKALDGLPADQRQALEAAAHRVRVYHEKQRMEGWSYTEADGTMLGQMITPLDRVGLYVPGGKAAYPSSVLMNAIPAKVAGVKELIMVVPTPGGEHNQLVLAAACLAGVDRVFTIGGAQAVGALAYGTEAVPQVDKIVGPGNAYVACAKRRVFGIVGIDMIAGPSEILVVADGSSDPDWVAMDLFSQAEHDELAQSILICTDAAYIDRVQASIEKLLPTMPRREVIETSLTNRGALILVRDLEEACAIANRVAPEHLELSLADPDPWVAKIHHAGAIFIGHYTSESLGDYCAGPNHVLPTSGSARFSSPLGVYDFQKRTSLIKVSKAGAQTLGKIASTLAHGEGLPAHAKSAEFRLEN</sequence>
<reference key="1">
    <citation type="journal article" date="2009" name="BMC Genomics">
        <title>Metabolic analysis of the soil microbe Dechloromonas aromatica str. RCB: indications of a surprisingly complex life-style and cryptic anaerobic pathways for aromatic degradation.</title>
        <authorList>
            <person name="Salinero K.K."/>
            <person name="Keller K."/>
            <person name="Feil W.S."/>
            <person name="Feil H."/>
            <person name="Trong S."/>
            <person name="Di Bartolo G."/>
            <person name="Lapidus A."/>
        </authorList>
    </citation>
    <scope>NUCLEOTIDE SEQUENCE [LARGE SCALE GENOMIC DNA]</scope>
    <source>
        <strain>RCB</strain>
    </source>
</reference>
<evidence type="ECO:0000255" key="1">
    <source>
        <dbReference type="HAMAP-Rule" id="MF_01024"/>
    </source>
</evidence>
<gene>
    <name evidence="1" type="primary">hisD</name>
    <name type="ordered locus">Daro_3387</name>
</gene>
<keyword id="KW-0028">Amino-acid biosynthesis</keyword>
<keyword id="KW-0368">Histidine biosynthesis</keyword>
<keyword id="KW-0479">Metal-binding</keyword>
<keyword id="KW-0520">NAD</keyword>
<keyword id="KW-0560">Oxidoreductase</keyword>
<keyword id="KW-0862">Zinc</keyword>